<comment type="function">
    <text evidence="1">Catalyzes the sequential NAD-dependent oxidations of L-histidinol to L-histidinaldehyde and then to L-histidine.</text>
</comment>
<comment type="catalytic activity">
    <reaction evidence="1">
        <text>L-histidinol + 2 NAD(+) + H2O = L-histidine + 2 NADH + 3 H(+)</text>
        <dbReference type="Rhea" id="RHEA:20641"/>
        <dbReference type="ChEBI" id="CHEBI:15377"/>
        <dbReference type="ChEBI" id="CHEBI:15378"/>
        <dbReference type="ChEBI" id="CHEBI:57540"/>
        <dbReference type="ChEBI" id="CHEBI:57595"/>
        <dbReference type="ChEBI" id="CHEBI:57699"/>
        <dbReference type="ChEBI" id="CHEBI:57945"/>
        <dbReference type="EC" id="1.1.1.23"/>
    </reaction>
</comment>
<comment type="cofactor">
    <cofactor evidence="1">
        <name>Zn(2+)</name>
        <dbReference type="ChEBI" id="CHEBI:29105"/>
    </cofactor>
    <text evidence="1">Binds 1 zinc ion per subunit.</text>
</comment>
<comment type="pathway">
    <text evidence="1">Amino-acid biosynthesis; L-histidine biosynthesis; L-histidine from 5-phospho-alpha-D-ribose 1-diphosphate: step 9/9.</text>
</comment>
<comment type="similarity">
    <text evidence="1">Belongs to the histidinol dehydrogenase family.</text>
</comment>
<dbReference type="EC" id="1.1.1.23" evidence="1"/>
<dbReference type="EMBL" id="AE016827">
    <property type="protein sequence ID" value="AAU38499.1"/>
    <property type="molecule type" value="Genomic_DNA"/>
</dbReference>
<dbReference type="RefSeq" id="WP_011201052.1">
    <property type="nucleotide sequence ID" value="NC_006300.1"/>
</dbReference>
<dbReference type="SMR" id="Q65RB1"/>
<dbReference type="STRING" id="221988.MS1892"/>
<dbReference type="KEGG" id="msu:MS1892"/>
<dbReference type="eggNOG" id="COG0141">
    <property type="taxonomic scope" value="Bacteria"/>
</dbReference>
<dbReference type="HOGENOM" id="CLU_006732_3_0_6"/>
<dbReference type="OrthoDB" id="9805269at2"/>
<dbReference type="UniPathway" id="UPA00031">
    <property type="reaction ID" value="UER00014"/>
</dbReference>
<dbReference type="Proteomes" id="UP000000607">
    <property type="component" value="Chromosome"/>
</dbReference>
<dbReference type="GO" id="GO:0005829">
    <property type="term" value="C:cytosol"/>
    <property type="evidence" value="ECO:0007669"/>
    <property type="project" value="TreeGrafter"/>
</dbReference>
<dbReference type="GO" id="GO:0004399">
    <property type="term" value="F:histidinol dehydrogenase activity"/>
    <property type="evidence" value="ECO:0007669"/>
    <property type="project" value="UniProtKB-UniRule"/>
</dbReference>
<dbReference type="GO" id="GO:0051287">
    <property type="term" value="F:NAD binding"/>
    <property type="evidence" value="ECO:0007669"/>
    <property type="project" value="InterPro"/>
</dbReference>
<dbReference type="GO" id="GO:0008270">
    <property type="term" value="F:zinc ion binding"/>
    <property type="evidence" value="ECO:0007669"/>
    <property type="project" value="UniProtKB-UniRule"/>
</dbReference>
<dbReference type="GO" id="GO:0000105">
    <property type="term" value="P:L-histidine biosynthetic process"/>
    <property type="evidence" value="ECO:0007669"/>
    <property type="project" value="UniProtKB-UniRule"/>
</dbReference>
<dbReference type="CDD" id="cd06572">
    <property type="entry name" value="Histidinol_dh"/>
    <property type="match status" value="1"/>
</dbReference>
<dbReference type="FunFam" id="1.20.5.1300:FF:000001">
    <property type="entry name" value="Histidine biosynthesis trifunctional protein"/>
    <property type="match status" value="1"/>
</dbReference>
<dbReference type="FunFam" id="3.40.50.1980:FF:000001">
    <property type="entry name" value="Histidinol dehydrogenase"/>
    <property type="match status" value="1"/>
</dbReference>
<dbReference type="FunFam" id="3.40.50.1980:FF:000002">
    <property type="entry name" value="Histidinol dehydrogenase, chloroplastic"/>
    <property type="match status" value="1"/>
</dbReference>
<dbReference type="Gene3D" id="1.20.5.1300">
    <property type="match status" value="1"/>
</dbReference>
<dbReference type="Gene3D" id="3.40.50.1980">
    <property type="entry name" value="Nitrogenase molybdenum iron protein domain"/>
    <property type="match status" value="2"/>
</dbReference>
<dbReference type="HAMAP" id="MF_01024">
    <property type="entry name" value="HisD"/>
    <property type="match status" value="1"/>
</dbReference>
<dbReference type="InterPro" id="IPR016161">
    <property type="entry name" value="Ald_DH/histidinol_DH"/>
</dbReference>
<dbReference type="InterPro" id="IPR001692">
    <property type="entry name" value="Histidinol_DH_CS"/>
</dbReference>
<dbReference type="InterPro" id="IPR022695">
    <property type="entry name" value="Histidinol_DH_monofunct"/>
</dbReference>
<dbReference type="InterPro" id="IPR012131">
    <property type="entry name" value="Hstdl_DH"/>
</dbReference>
<dbReference type="NCBIfam" id="TIGR00069">
    <property type="entry name" value="hisD"/>
    <property type="match status" value="1"/>
</dbReference>
<dbReference type="PANTHER" id="PTHR21256:SF2">
    <property type="entry name" value="HISTIDINE BIOSYNTHESIS TRIFUNCTIONAL PROTEIN"/>
    <property type="match status" value="1"/>
</dbReference>
<dbReference type="PANTHER" id="PTHR21256">
    <property type="entry name" value="HISTIDINOL DEHYDROGENASE HDH"/>
    <property type="match status" value="1"/>
</dbReference>
<dbReference type="Pfam" id="PF00815">
    <property type="entry name" value="Histidinol_dh"/>
    <property type="match status" value="1"/>
</dbReference>
<dbReference type="PIRSF" id="PIRSF000099">
    <property type="entry name" value="Histidinol_dh"/>
    <property type="match status" value="1"/>
</dbReference>
<dbReference type="PRINTS" id="PR00083">
    <property type="entry name" value="HOLDHDRGNASE"/>
</dbReference>
<dbReference type="SUPFAM" id="SSF53720">
    <property type="entry name" value="ALDH-like"/>
    <property type="match status" value="1"/>
</dbReference>
<dbReference type="PROSITE" id="PS00611">
    <property type="entry name" value="HISOL_DEHYDROGENASE"/>
    <property type="match status" value="1"/>
</dbReference>
<feature type="chain" id="PRO_0000135793" description="Histidinol dehydrogenase">
    <location>
        <begin position="1"/>
        <end position="428"/>
    </location>
</feature>
<feature type="active site" description="Proton acceptor" evidence="1">
    <location>
        <position position="323"/>
    </location>
</feature>
<feature type="active site" description="Proton acceptor" evidence="1">
    <location>
        <position position="324"/>
    </location>
</feature>
<feature type="binding site" evidence="1">
    <location>
        <position position="127"/>
    </location>
    <ligand>
        <name>NAD(+)</name>
        <dbReference type="ChEBI" id="CHEBI:57540"/>
    </ligand>
</feature>
<feature type="binding site" evidence="1">
    <location>
        <position position="185"/>
    </location>
    <ligand>
        <name>NAD(+)</name>
        <dbReference type="ChEBI" id="CHEBI:57540"/>
    </ligand>
</feature>
<feature type="binding site" evidence="1">
    <location>
        <position position="208"/>
    </location>
    <ligand>
        <name>NAD(+)</name>
        <dbReference type="ChEBI" id="CHEBI:57540"/>
    </ligand>
</feature>
<feature type="binding site" evidence="1">
    <location>
        <position position="234"/>
    </location>
    <ligand>
        <name>substrate</name>
    </ligand>
</feature>
<feature type="binding site" evidence="1">
    <location>
        <position position="256"/>
    </location>
    <ligand>
        <name>substrate</name>
    </ligand>
</feature>
<feature type="binding site" evidence="1">
    <location>
        <position position="256"/>
    </location>
    <ligand>
        <name>Zn(2+)</name>
        <dbReference type="ChEBI" id="CHEBI:29105"/>
    </ligand>
</feature>
<feature type="binding site" evidence="1">
    <location>
        <position position="259"/>
    </location>
    <ligand>
        <name>substrate</name>
    </ligand>
</feature>
<feature type="binding site" evidence="1">
    <location>
        <position position="259"/>
    </location>
    <ligand>
        <name>Zn(2+)</name>
        <dbReference type="ChEBI" id="CHEBI:29105"/>
    </ligand>
</feature>
<feature type="binding site" evidence="1">
    <location>
        <position position="324"/>
    </location>
    <ligand>
        <name>substrate</name>
    </ligand>
</feature>
<feature type="binding site" evidence="1">
    <location>
        <position position="357"/>
    </location>
    <ligand>
        <name>substrate</name>
    </ligand>
</feature>
<feature type="binding site" evidence="1">
    <location>
        <position position="357"/>
    </location>
    <ligand>
        <name>Zn(2+)</name>
        <dbReference type="ChEBI" id="CHEBI:29105"/>
    </ligand>
</feature>
<feature type="binding site" evidence="1">
    <location>
        <position position="411"/>
    </location>
    <ligand>
        <name>substrate</name>
    </ligand>
</feature>
<feature type="binding site" evidence="1">
    <location>
        <position position="416"/>
    </location>
    <ligand>
        <name>substrate</name>
    </ligand>
</feature>
<feature type="binding site" evidence="1">
    <location>
        <position position="416"/>
    </location>
    <ligand>
        <name>Zn(2+)</name>
        <dbReference type="ChEBI" id="CHEBI:29105"/>
    </ligand>
</feature>
<keyword id="KW-0028">Amino-acid biosynthesis</keyword>
<keyword id="KW-0368">Histidine biosynthesis</keyword>
<keyword id="KW-0479">Metal-binding</keyword>
<keyword id="KW-0520">NAD</keyword>
<keyword id="KW-0560">Oxidoreductase</keyword>
<keyword id="KW-0862">Zinc</keyword>
<reference key="1">
    <citation type="journal article" date="2004" name="Nat. Biotechnol.">
        <title>The genome sequence of the capnophilic rumen bacterium Mannheimia succiniciproducens.</title>
        <authorList>
            <person name="Hong S.H."/>
            <person name="Kim J.S."/>
            <person name="Lee S.Y."/>
            <person name="In Y.H."/>
            <person name="Choi S.S."/>
            <person name="Rih J.-K."/>
            <person name="Kim C.H."/>
            <person name="Jeong H."/>
            <person name="Hur C.G."/>
            <person name="Kim J.J."/>
        </authorList>
    </citation>
    <scope>NUCLEOTIDE SEQUENCE [LARGE SCALE GENOMIC DNA]</scope>
    <source>
        <strain>KCTC 0769BP / MBEL55E</strain>
    </source>
</reference>
<organism>
    <name type="scientific">Mannheimia succiniciproducens (strain KCTC 0769BP / MBEL55E)</name>
    <dbReference type="NCBI Taxonomy" id="221988"/>
    <lineage>
        <taxon>Bacteria</taxon>
        <taxon>Pseudomonadati</taxon>
        <taxon>Pseudomonadota</taxon>
        <taxon>Gammaproteobacteria</taxon>
        <taxon>Pasteurellales</taxon>
        <taxon>Pasteurellaceae</taxon>
        <taxon>Basfia</taxon>
    </lineage>
</organism>
<name>HISX_MANSM</name>
<gene>
    <name evidence="1" type="primary">hisD</name>
    <name type="ordered locus">MS1892</name>
</gene>
<proteinExistence type="inferred from homology"/>
<accession>Q65RB1</accession>
<evidence type="ECO:0000255" key="1">
    <source>
        <dbReference type="HAMAP-Rule" id="MF_01024"/>
    </source>
</evidence>
<sequence length="428" mass="46088">MQTLIWKDLTEQEKKQALTRPAISAAGNIKDAVDAIRENVVANGDKALFELSEKFDRVKLNSLEVSEQQIEEAAQRLPEELKQAIQNAKKNIEAFHLAQVPVEADVETQSGVRCQVLTRPINRVGLYIPGGSAPLFSTVLMLAIPAKIAGCKKIVLCSPPPIADAILYAANLCGVETIYQVGGAQAVVAMAFGTETVAKVDKIFGPGNAFVTEAKRQVSQAVNGAAIDMQAGPSEVLVLADENADPDFVASDLLSQAEHGADSQVILVTPSERLALETELAVERQLTTLPRSEIAQKALAHSRIFIAENLQQCVEISNEYAPEHLVVQVQNARDLLSNIDNAGSIFLGAYSPESMGDYASGTNHVLPTYGYTRTSSSLGLADFSKRMTVQELSPQGFKDLAKTVEVMAAAERLDAHKQAVSIRLAKIK</sequence>
<protein>
    <recommendedName>
        <fullName evidence="1">Histidinol dehydrogenase</fullName>
        <shortName evidence="1">HDH</shortName>
        <ecNumber evidence="1">1.1.1.23</ecNumber>
    </recommendedName>
</protein>